<keyword id="KW-0153">Cholesterol metabolism</keyword>
<keyword id="KW-0325">Glycoprotein</keyword>
<keyword id="KW-0345">HDL</keyword>
<keyword id="KW-0443">Lipid metabolism</keyword>
<keyword id="KW-0445">Lipid transport</keyword>
<keyword id="KW-0449">Lipoprotein</keyword>
<keyword id="KW-0558">Oxidation</keyword>
<keyword id="KW-0564">Palmitate</keyword>
<keyword id="KW-0597">Phosphoprotein</keyword>
<keyword id="KW-1185">Reference proteome</keyword>
<keyword id="KW-0677">Repeat</keyword>
<keyword id="KW-0964">Secreted</keyword>
<keyword id="KW-0732">Signal</keyword>
<keyword id="KW-0753">Steroid metabolism</keyword>
<keyword id="KW-1207">Sterol metabolism</keyword>
<keyword id="KW-0813">Transport</keyword>
<gene>
    <name type="primary">APOA1</name>
</gene>
<protein>
    <recommendedName>
        <fullName>Apolipoprotein A-I</fullName>
        <shortName>Apo-AI</shortName>
        <shortName>ApoA-I</shortName>
    </recommendedName>
    <alternativeName>
        <fullName>Apolipoprotein A1</fullName>
    </alternativeName>
    <component>
        <recommendedName>
            <fullName>Proapolipoprotein A-I</fullName>
            <shortName>ProapoA-I</shortName>
        </recommendedName>
    </component>
    <component>
        <recommendedName>
            <fullName>Truncated apolipoprotein A-I</fullName>
        </recommendedName>
    </component>
</protein>
<dbReference type="EMBL" id="ABRT02360066">
    <property type="status" value="NOT_ANNOTATED_CDS"/>
    <property type="molecule type" value="Genomic_DNA"/>
</dbReference>
<dbReference type="RefSeq" id="XP_008054092.1">
    <property type="nucleotide sequence ID" value="XM_008055901.1"/>
</dbReference>
<dbReference type="SMR" id="P0DMC1"/>
<dbReference type="STRING" id="1868482.ENSTSYP00000021888"/>
<dbReference type="Ensembl" id="ENSTSYT00000028266">
    <property type="protein sequence ID" value="ENSTSYP00000021888"/>
    <property type="gene ID" value="ENSTSYG00000026879"/>
</dbReference>
<dbReference type="GeneID" id="103258195"/>
<dbReference type="KEGG" id="csyr:103258195"/>
<dbReference type="CTD" id="335"/>
<dbReference type="OMA" id="EYVAQFE"/>
<dbReference type="OrthoDB" id="8727817at2759"/>
<dbReference type="Proteomes" id="UP000189704">
    <property type="component" value="Unplaced"/>
</dbReference>
<dbReference type="GO" id="GO:0042627">
    <property type="term" value="C:chylomicron"/>
    <property type="evidence" value="ECO:0007669"/>
    <property type="project" value="TreeGrafter"/>
</dbReference>
<dbReference type="GO" id="GO:0030139">
    <property type="term" value="C:endocytic vesicle"/>
    <property type="evidence" value="ECO:0007669"/>
    <property type="project" value="Ensembl"/>
</dbReference>
<dbReference type="GO" id="GO:1903561">
    <property type="term" value="C:extracellular vesicle"/>
    <property type="evidence" value="ECO:0007669"/>
    <property type="project" value="TreeGrafter"/>
</dbReference>
<dbReference type="GO" id="GO:0034362">
    <property type="term" value="C:low-density lipoprotein particle"/>
    <property type="evidence" value="ECO:0007669"/>
    <property type="project" value="TreeGrafter"/>
</dbReference>
<dbReference type="GO" id="GO:0034366">
    <property type="term" value="C:spherical high-density lipoprotein particle"/>
    <property type="evidence" value="ECO:0007669"/>
    <property type="project" value="Ensembl"/>
</dbReference>
<dbReference type="GO" id="GO:0034361">
    <property type="term" value="C:very-low-density lipoprotein particle"/>
    <property type="evidence" value="ECO:0007669"/>
    <property type="project" value="Ensembl"/>
</dbReference>
<dbReference type="GO" id="GO:0001540">
    <property type="term" value="F:amyloid-beta binding"/>
    <property type="evidence" value="ECO:0007669"/>
    <property type="project" value="Ensembl"/>
</dbReference>
<dbReference type="GO" id="GO:0034191">
    <property type="term" value="F:apolipoprotein A-I receptor binding"/>
    <property type="evidence" value="ECO:0007669"/>
    <property type="project" value="Ensembl"/>
</dbReference>
<dbReference type="GO" id="GO:0045499">
    <property type="term" value="F:chemorepellent activity"/>
    <property type="evidence" value="ECO:0007669"/>
    <property type="project" value="Ensembl"/>
</dbReference>
<dbReference type="GO" id="GO:0015485">
    <property type="term" value="F:cholesterol binding"/>
    <property type="evidence" value="ECO:0007669"/>
    <property type="project" value="Ensembl"/>
</dbReference>
<dbReference type="GO" id="GO:0120020">
    <property type="term" value="F:cholesterol transfer activity"/>
    <property type="evidence" value="ECO:0007669"/>
    <property type="project" value="Ensembl"/>
</dbReference>
<dbReference type="GO" id="GO:0019899">
    <property type="term" value="F:enzyme binding"/>
    <property type="evidence" value="ECO:0007669"/>
    <property type="project" value="Ensembl"/>
</dbReference>
<dbReference type="GO" id="GO:0031072">
    <property type="term" value="F:heat shock protein binding"/>
    <property type="evidence" value="ECO:0007669"/>
    <property type="project" value="Ensembl"/>
</dbReference>
<dbReference type="GO" id="GO:0008035">
    <property type="term" value="F:high-density lipoprotein particle binding"/>
    <property type="evidence" value="ECO:0007669"/>
    <property type="project" value="Ensembl"/>
</dbReference>
<dbReference type="GO" id="GO:0070653">
    <property type="term" value="F:high-density lipoprotein particle receptor binding"/>
    <property type="evidence" value="ECO:0007669"/>
    <property type="project" value="Ensembl"/>
</dbReference>
<dbReference type="GO" id="GO:0060228">
    <property type="term" value="F:phosphatidylcholine-sterol O-acyltransferase activator activity"/>
    <property type="evidence" value="ECO:0007669"/>
    <property type="project" value="Ensembl"/>
</dbReference>
<dbReference type="GO" id="GO:0005543">
    <property type="term" value="F:phospholipid binding"/>
    <property type="evidence" value="ECO:0007669"/>
    <property type="project" value="Ensembl"/>
</dbReference>
<dbReference type="GO" id="GO:0042803">
    <property type="term" value="F:protein homodimerization activity"/>
    <property type="evidence" value="ECO:0000250"/>
    <property type="project" value="UniProtKB"/>
</dbReference>
<dbReference type="GO" id="GO:0030325">
    <property type="term" value="P:adrenal gland development"/>
    <property type="evidence" value="ECO:0007669"/>
    <property type="project" value="Ensembl"/>
</dbReference>
<dbReference type="GO" id="GO:0034205">
    <property type="term" value="P:amyloid-beta formation"/>
    <property type="evidence" value="ECO:0007669"/>
    <property type="project" value="Ensembl"/>
</dbReference>
<dbReference type="GO" id="GO:0043534">
    <property type="term" value="P:blood vessel endothelial cell migration"/>
    <property type="evidence" value="ECO:0007669"/>
    <property type="project" value="Ensembl"/>
</dbReference>
<dbReference type="GO" id="GO:0071402">
    <property type="term" value="P:cellular response to lipoprotein particle stimulus"/>
    <property type="evidence" value="ECO:0007669"/>
    <property type="project" value="Ensembl"/>
</dbReference>
<dbReference type="GO" id="GO:0006695">
    <property type="term" value="P:cholesterol biosynthetic process"/>
    <property type="evidence" value="ECO:0007669"/>
    <property type="project" value="Ensembl"/>
</dbReference>
<dbReference type="GO" id="GO:0033344">
    <property type="term" value="P:cholesterol efflux"/>
    <property type="evidence" value="ECO:0007669"/>
    <property type="project" value="Ensembl"/>
</dbReference>
<dbReference type="GO" id="GO:0042632">
    <property type="term" value="P:cholesterol homeostasis"/>
    <property type="evidence" value="ECO:0007669"/>
    <property type="project" value="Ensembl"/>
</dbReference>
<dbReference type="GO" id="GO:0070508">
    <property type="term" value="P:cholesterol import"/>
    <property type="evidence" value="ECO:0007669"/>
    <property type="project" value="Ensembl"/>
</dbReference>
<dbReference type="GO" id="GO:0001935">
    <property type="term" value="P:endothelial cell proliferation"/>
    <property type="evidence" value="ECO:0007669"/>
    <property type="project" value="Ensembl"/>
</dbReference>
<dbReference type="GO" id="GO:0007186">
    <property type="term" value="P:G protein-coupled receptor signaling pathway"/>
    <property type="evidence" value="ECO:0007669"/>
    <property type="project" value="Ensembl"/>
</dbReference>
<dbReference type="GO" id="GO:0008211">
    <property type="term" value="P:glucocorticoid metabolic process"/>
    <property type="evidence" value="ECO:0007669"/>
    <property type="project" value="Ensembl"/>
</dbReference>
<dbReference type="GO" id="GO:0034380">
    <property type="term" value="P:high-density lipoprotein particle assembly"/>
    <property type="evidence" value="ECO:0007669"/>
    <property type="project" value="Ensembl"/>
</dbReference>
<dbReference type="GO" id="GO:0034375">
    <property type="term" value="P:high-density lipoprotein particle remodeling"/>
    <property type="evidence" value="ECO:0007669"/>
    <property type="project" value="Ensembl"/>
</dbReference>
<dbReference type="GO" id="GO:0007229">
    <property type="term" value="P:integrin-mediated signaling pathway"/>
    <property type="evidence" value="ECO:0007669"/>
    <property type="project" value="Ensembl"/>
</dbReference>
<dbReference type="GO" id="GO:0019915">
    <property type="term" value="P:lipid storage"/>
    <property type="evidence" value="ECO:0007669"/>
    <property type="project" value="Ensembl"/>
</dbReference>
<dbReference type="GO" id="GO:0042158">
    <property type="term" value="P:lipoprotein biosynthetic process"/>
    <property type="evidence" value="ECO:0007669"/>
    <property type="project" value="Ensembl"/>
</dbReference>
<dbReference type="GO" id="GO:0060354">
    <property type="term" value="P:negative regulation of cell adhesion molecule production"/>
    <property type="evidence" value="ECO:0007669"/>
    <property type="project" value="Ensembl"/>
</dbReference>
<dbReference type="GO" id="GO:0002719">
    <property type="term" value="P:negative regulation of cytokine production involved in immune response"/>
    <property type="evidence" value="ECO:0007669"/>
    <property type="project" value="Ensembl"/>
</dbReference>
<dbReference type="GO" id="GO:0034115">
    <property type="term" value="P:negative regulation of heterotypic cell-cell adhesion"/>
    <property type="evidence" value="ECO:0007669"/>
    <property type="project" value="Ensembl"/>
</dbReference>
<dbReference type="GO" id="GO:0050728">
    <property type="term" value="P:negative regulation of inflammatory response"/>
    <property type="evidence" value="ECO:0007669"/>
    <property type="project" value="Ensembl"/>
</dbReference>
<dbReference type="GO" id="GO:0032691">
    <property type="term" value="P:negative regulation of interleukin-1 beta production"/>
    <property type="evidence" value="ECO:0007669"/>
    <property type="project" value="Ensembl"/>
</dbReference>
<dbReference type="GO" id="GO:0010804">
    <property type="term" value="P:negative regulation of tumor necrosis factor-mediated signaling pathway"/>
    <property type="evidence" value="ECO:0007669"/>
    <property type="project" value="Ensembl"/>
</dbReference>
<dbReference type="GO" id="GO:0010903">
    <property type="term" value="P:negative regulation of very-low-density lipoprotein particle remodeling"/>
    <property type="evidence" value="ECO:0007669"/>
    <property type="project" value="Ensembl"/>
</dbReference>
<dbReference type="GO" id="GO:0006656">
    <property type="term" value="P:phosphatidylcholine biosynthetic process"/>
    <property type="evidence" value="ECO:0007669"/>
    <property type="project" value="Ensembl"/>
</dbReference>
<dbReference type="GO" id="GO:0033700">
    <property type="term" value="P:phospholipid efflux"/>
    <property type="evidence" value="ECO:0007669"/>
    <property type="project" value="Ensembl"/>
</dbReference>
<dbReference type="GO" id="GO:0055091">
    <property type="term" value="P:phospholipid homeostasis"/>
    <property type="evidence" value="ECO:0007669"/>
    <property type="project" value="Ensembl"/>
</dbReference>
<dbReference type="GO" id="GO:0010875">
    <property type="term" value="P:positive regulation of cholesterol efflux"/>
    <property type="evidence" value="ECO:0000250"/>
    <property type="project" value="UniProtKB"/>
</dbReference>
<dbReference type="GO" id="GO:0090205">
    <property type="term" value="P:positive regulation of cholesterol metabolic process"/>
    <property type="evidence" value="ECO:0007669"/>
    <property type="project" value="Ensembl"/>
</dbReference>
<dbReference type="GO" id="GO:0050766">
    <property type="term" value="P:positive regulation of phagocytosis"/>
    <property type="evidence" value="ECO:0000250"/>
    <property type="project" value="UniProtKB"/>
</dbReference>
<dbReference type="GO" id="GO:1902995">
    <property type="term" value="P:positive regulation of phospholipid efflux"/>
    <property type="evidence" value="ECO:0000250"/>
    <property type="project" value="UniProtKB"/>
</dbReference>
<dbReference type="GO" id="GO:0035025">
    <property type="term" value="P:positive regulation of Rho protein signal transduction"/>
    <property type="evidence" value="ECO:0007669"/>
    <property type="project" value="Ensembl"/>
</dbReference>
<dbReference type="GO" id="GO:0051496">
    <property type="term" value="P:positive regulation of stress fiber assembly"/>
    <property type="evidence" value="ECO:0007669"/>
    <property type="project" value="Ensembl"/>
</dbReference>
<dbReference type="GO" id="GO:1900026">
    <property type="term" value="P:positive regulation of substrate adhesion-dependent cell spreading"/>
    <property type="evidence" value="ECO:0007669"/>
    <property type="project" value="Ensembl"/>
</dbReference>
<dbReference type="GO" id="GO:0050821">
    <property type="term" value="P:protein stabilization"/>
    <property type="evidence" value="ECO:0000250"/>
    <property type="project" value="UniProtKB"/>
</dbReference>
<dbReference type="GO" id="GO:0032489">
    <property type="term" value="P:regulation of Cdc42 protein signal transduction"/>
    <property type="evidence" value="ECO:0007669"/>
    <property type="project" value="Ensembl"/>
</dbReference>
<dbReference type="GO" id="GO:0030300">
    <property type="term" value="P:regulation of intestinal cholesterol absorption"/>
    <property type="evidence" value="ECO:0007669"/>
    <property type="project" value="Ensembl"/>
</dbReference>
<dbReference type="GO" id="GO:0043691">
    <property type="term" value="P:reverse cholesterol transport"/>
    <property type="evidence" value="ECO:0007669"/>
    <property type="project" value="Ensembl"/>
</dbReference>
<dbReference type="GO" id="GO:0070328">
    <property type="term" value="P:triglyceride homeostasis"/>
    <property type="evidence" value="ECO:0007669"/>
    <property type="project" value="Ensembl"/>
</dbReference>
<dbReference type="GO" id="GO:0051180">
    <property type="term" value="P:vitamin transport"/>
    <property type="evidence" value="ECO:0007669"/>
    <property type="project" value="Ensembl"/>
</dbReference>
<dbReference type="FunFam" id="1.20.120.20:FF:000001">
    <property type="entry name" value="Apolipoprotein A-I"/>
    <property type="match status" value="1"/>
</dbReference>
<dbReference type="FunFam" id="1.20.5.20:FF:000001">
    <property type="entry name" value="apolipoprotein A-I"/>
    <property type="match status" value="1"/>
</dbReference>
<dbReference type="Gene3D" id="1.20.5.20">
    <property type="match status" value="1"/>
</dbReference>
<dbReference type="Gene3D" id="6.10.140.380">
    <property type="match status" value="1"/>
</dbReference>
<dbReference type="Gene3D" id="1.20.120.20">
    <property type="entry name" value="Apolipoprotein"/>
    <property type="match status" value="1"/>
</dbReference>
<dbReference type="InterPro" id="IPR000074">
    <property type="entry name" value="ApoA_E"/>
</dbReference>
<dbReference type="InterPro" id="IPR050163">
    <property type="entry name" value="Apolipoprotein_A1/A4/E"/>
</dbReference>
<dbReference type="PANTHER" id="PTHR18976">
    <property type="entry name" value="APOLIPOPROTEIN"/>
    <property type="match status" value="1"/>
</dbReference>
<dbReference type="PANTHER" id="PTHR18976:SF11">
    <property type="entry name" value="APOLIPOPROTEIN A-I"/>
    <property type="match status" value="1"/>
</dbReference>
<dbReference type="Pfam" id="PF01442">
    <property type="entry name" value="Apolipoprotein"/>
    <property type="match status" value="1"/>
</dbReference>
<dbReference type="SUPFAM" id="SSF58113">
    <property type="entry name" value="Apolipoprotein A-I"/>
    <property type="match status" value="1"/>
</dbReference>
<proteinExistence type="evidence at transcript level"/>
<name>APOA1_CARSF</name>
<sequence>MKAVVLTLAVLFLTGSQARHFWQQDEPQSPWDRVKDLATVYVDAIKDSGRDYVSQFEASALGKQLNLKLLDNWDSLTTSFSKLREQLGPVTQEFWDNLEKETEALRQEMNKDVEEMKTKVQPYLDEFQKKWQEEVELYRQKVEPLGSELREGARQKLQELQEKLSPLGEELRDRARTHVDSLRTQLAPYSEELRQRLASRLEALKESGGASLADYHAKASEQLSALSEKAKPALEDLRQGLLPVLESFKVSLLSALEEASKKLNAQ</sequence>
<reference key="1">
    <citation type="submission" date="2013-06" db="EMBL/GenBank/DDBJ databases">
        <authorList>
            <person name="Warren W."/>
            <person name="Wilson R.K."/>
        </authorList>
    </citation>
    <scope>NUCLEOTIDE SEQUENCE [LARGE SCALE GENOMIC DNA]</scope>
</reference>
<reference key="2">
    <citation type="unpublished observations" date="2013-12">
        <authorList>
            <person name="Puppione D.L."/>
        </authorList>
    </citation>
    <scope>IDENTIFICATION</scope>
</reference>
<evidence type="ECO:0000250" key="1"/>
<evidence type="ECO:0000250" key="2">
    <source>
        <dbReference type="UniProtKB" id="G5BQH5"/>
    </source>
</evidence>
<evidence type="ECO:0000250" key="3">
    <source>
        <dbReference type="UniProtKB" id="P02647"/>
    </source>
</evidence>
<evidence type="ECO:0000250" key="4">
    <source>
        <dbReference type="UniProtKB" id="P04639"/>
    </source>
</evidence>
<evidence type="ECO:0000305" key="5"/>
<organism>
    <name type="scientific">Carlito syrichta</name>
    <name type="common">Philippine tarsier</name>
    <name type="synonym">Tarsius syrichta</name>
    <dbReference type="NCBI Taxonomy" id="1868482"/>
    <lineage>
        <taxon>Eukaryota</taxon>
        <taxon>Metazoa</taxon>
        <taxon>Chordata</taxon>
        <taxon>Craniata</taxon>
        <taxon>Vertebrata</taxon>
        <taxon>Euteleostomi</taxon>
        <taxon>Mammalia</taxon>
        <taxon>Eutheria</taxon>
        <taxon>Euarchontoglires</taxon>
        <taxon>Primates</taxon>
        <taxon>Haplorrhini</taxon>
        <taxon>Tarsiiformes</taxon>
        <taxon>Tarsiidae</taxon>
        <taxon>Carlito</taxon>
    </lineage>
</organism>
<feature type="signal peptide" evidence="1">
    <location>
        <begin position="1"/>
        <end position="18"/>
    </location>
</feature>
<feature type="chain" id="PRO_0000425337" description="Proapolipoprotein A-I">
    <location>
        <begin position="19"/>
        <end position="266"/>
    </location>
</feature>
<feature type="chain" id="PRO_0000425262" description="Apolipoprotein A-I">
    <location>
        <begin position="25"/>
        <end position="266"/>
    </location>
</feature>
<feature type="chain" id="PRO_0000425263" description="Truncated apolipoprotein A-I">
    <location>
        <begin position="25"/>
        <end position="265"/>
    </location>
</feature>
<feature type="repeat" description="1">
    <location>
        <begin position="67"/>
        <end position="88"/>
    </location>
</feature>
<feature type="repeat" description="2">
    <location>
        <begin position="89"/>
        <end position="110"/>
    </location>
</feature>
<feature type="repeat" description="3; half-length">
    <location>
        <begin position="111"/>
        <end position="121"/>
    </location>
</feature>
<feature type="repeat" description="4">
    <location>
        <begin position="122"/>
        <end position="143"/>
    </location>
</feature>
<feature type="repeat" description="5">
    <location>
        <begin position="144"/>
        <end position="165"/>
    </location>
</feature>
<feature type="repeat" description="6">
    <location>
        <begin position="166"/>
        <end position="187"/>
    </location>
</feature>
<feature type="repeat" description="7">
    <location>
        <begin position="188"/>
        <end position="209"/>
    </location>
</feature>
<feature type="repeat" description="8">
    <location>
        <begin position="210"/>
        <end position="231"/>
    </location>
</feature>
<feature type="repeat" description="9; half-length">
    <location>
        <begin position="232"/>
        <end position="242"/>
    </location>
</feature>
<feature type="repeat" description="10">
    <location>
        <begin position="243"/>
        <end position="266"/>
    </location>
</feature>
<feature type="region of interest" description="10 X approximate tandem repeats" evidence="1">
    <location>
        <begin position="67"/>
        <end position="266"/>
    </location>
</feature>
<feature type="modified residue" description="Methionine sulfoxide" evidence="1">
    <location>
        <position position="109"/>
    </location>
</feature>
<accession>P0DMC1</accession>
<comment type="function">
    <text evidence="1">Participates in the reverse transport of cholesterol from tissues to the liver for excretion by promoting cholesterol efflux from tissues and by acting as a cofactor for the lecithin cholesterol acyltransferase (LCAT). As part of the SPAP complex, activates spermatozoa motility (By similarity).</text>
</comment>
<comment type="subunit">
    <text evidence="2 3 4">Homodimer (By similarity). Interacts with APOA1BP and CLU. Component of a sperm activating protein complex (SPAP), consisting of APOA1, an immunoglobulin heavy chain, an immunoglobulin light chain and albumin. Interacts with NDRG1. Interacts with SCGB3A2 (By similarity). Interacts with NAXE and YJEFN3 (By similarity).</text>
</comment>
<comment type="subcellular location">
    <subcellularLocation>
        <location>Secreted</location>
    </subcellularLocation>
</comment>
<comment type="tissue specificity">
    <text>Major protein of plasma HDL, also found in chylomicrons.</text>
</comment>
<comment type="PTM">
    <text evidence="1">Glycosylated.</text>
</comment>
<comment type="PTM">
    <text evidence="1">Palmitoylated.</text>
</comment>
<comment type="PTM">
    <text evidence="1">Phosphorylation sites are present in the extracellular medium.</text>
</comment>
<comment type="similarity">
    <text evidence="5">Belongs to the apolipoprotein A1/A4/E family.</text>
</comment>